<sequence length="366" mass="39728">MSNPPSKLYIGLMSGTSLDGVDAALVSIQNGELELKAFQTFPYTDNLKKQLHHLNQTPHVDLKALCDMEYQVANAFSEATQQLLDNCDHVASDIRAIGSHGQTIFHAPDIPMSLQIGHPAFIAKNTGITTVADFRIDDMANNGQGAPLAPAFHQKLFGNTVGTAVVNIGGISNITFLDQQKTLGFDTGPGNGLMDEYCEQFFNCSYDADGKMAQTGQVNMALLSDLMQEPYFRLPAPKTTGKDLFNSDWLNPFLAKYSNVSKKDILSTLNQLTVDTIIQGLNTLPSQPKRLLICGGGAENKTLISRLQAQLSYPVKTTQSVGVPPHAIEAMMCAWLAEQRLNNTPIALQHITGATKDSVLGAVWHP</sequence>
<organism>
    <name type="scientific">Hydrogenovibrio crunogenus (strain DSM 25203 / XCL-2)</name>
    <name type="common">Thiomicrospira crunogena</name>
    <dbReference type="NCBI Taxonomy" id="317025"/>
    <lineage>
        <taxon>Bacteria</taxon>
        <taxon>Pseudomonadati</taxon>
        <taxon>Pseudomonadota</taxon>
        <taxon>Gammaproteobacteria</taxon>
        <taxon>Thiotrichales</taxon>
        <taxon>Piscirickettsiaceae</taxon>
        <taxon>Hydrogenovibrio</taxon>
    </lineage>
</organism>
<accession>Q31IS6</accession>
<feature type="chain" id="PRO_0000250076" description="Anhydro-N-acetylmuramic acid kinase">
    <location>
        <begin position="1"/>
        <end position="366"/>
    </location>
</feature>
<feature type="binding site" evidence="1">
    <location>
        <begin position="15"/>
        <end position="22"/>
    </location>
    <ligand>
        <name>ATP</name>
        <dbReference type="ChEBI" id="CHEBI:30616"/>
    </ligand>
</feature>
<evidence type="ECO:0000255" key="1">
    <source>
        <dbReference type="HAMAP-Rule" id="MF_01270"/>
    </source>
</evidence>
<evidence type="ECO:0000305" key="2"/>
<comment type="function">
    <text evidence="1">Catalyzes the specific phosphorylation of 1,6-anhydro-N-acetylmuramic acid (anhMurNAc) with the simultaneous cleavage of the 1,6-anhydro ring, generating MurNAc-6-P. Is required for the utilization of anhMurNAc either imported from the medium or derived from its own cell wall murein, and thus plays a role in cell wall recycling.</text>
</comment>
<comment type="catalytic activity">
    <reaction evidence="1">
        <text>1,6-anhydro-N-acetyl-beta-muramate + ATP + H2O = N-acetyl-D-muramate 6-phosphate + ADP + H(+)</text>
        <dbReference type="Rhea" id="RHEA:24952"/>
        <dbReference type="ChEBI" id="CHEBI:15377"/>
        <dbReference type="ChEBI" id="CHEBI:15378"/>
        <dbReference type="ChEBI" id="CHEBI:30616"/>
        <dbReference type="ChEBI" id="CHEBI:58690"/>
        <dbReference type="ChEBI" id="CHEBI:58722"/>
        <dbReference type="ChEBI" id="CHEBI:456216"/>
        <dbReference type="EC" id="2.7.1.170"/>
    </reaction>
</comment>
<comment type="pathway">
    <text evidence="1">Amino-sugar metabolism; 1,6-anhydro-N-acetylmuramate degradation.</text>
</comment>
<comment type="pathway">
    <text evidence="1">Cell wall biogenesis; peptidoglycan recycling.</text>
</comment>
<comment type="similarity">
    <text evidence="1">Belongs to the anhydro-N-acetylmuramic acid kinase family.</text>
</comment>
<comment type="sequence caution" evidence="2">
    <conflict type="erroneous initiation">
        <sequence resource="EMBL-CDS" id="ABB40947"/>
    </conflict>
</comment>
<dbReference type="EC" id="2.7.1.170" evidence="1"/>
<dbReference type="EMBL" id="CP000109">
    <property type="protein sequence ID" value="ABB40947.1"/>
    <property type="status" value="ALT_INIT"/>
    <property type="molecule type" value="Genomic_DNA"/>
</dbReference>
<dbReference type="SMR" id="Q31IS6"/>
<dbReference type="STRING" id="317025.Tcr_0351"/>
<dbReference type="KEGG" id="tcx:Tcr_0351"/>
<dbReference type="eggNOG" id="COG2377">
    <property type="taxonomic scope" value="Bacteria"/>
</dbReference>
<dbReference type="HOGENOM" id="CLU_038782_0_0_6"/>
<dbReference type="OrthoDB" id="9763949at2"/>
<dbReference type="UniPathway" id="UPA00343"/>
<dbReference type="UniPathway" id="UPA00544"/>
<dbReference type="GO" id="GO:0005524">
    <property type="term" value="F:ATP binding"/>
    <property type="evidence" value="ECO:0007669"/>
    <property type="project" value="UniProtKB-UniRule"/>
</dbReference>
<dbReference type="GO" id="GO:0016301">
    <property type="term" value="F:kinase activity"/>
    <property type="evidence" value="ECO:0007669"/>
    <property type="project" value="UniProtKB-KW"/>
</dbReference>
<dbReference type="GO" id="GO:0016773">
    <property type="term" value="F:phosphotransferase activity, alcohol group as acceptor"/>
    <property type="evidence" value="ECO:0007669"/>
    <property type="project" value="UniProtKB-UniRule"/>
</dbReference>
<dbReference type="GO" id="GO:0097175">
    <property type="term" value="P:1,6-anhydro-N-acetyl-beta-muramic acid catabolic process"/>
    <property type="evidence" value="ECO:0007669"/>
    <property type="project" value="UniProtKB-UniRule"/>
</dbReference>
<dbReference type="GO" id="GO:0006040">
    <property type="term" value="P:amino sugar metabolic process"/>
    <property type="evidence" value="ECO:0007669"/>
    <property type="project" value="InterPro"/>
</dbReference>
<dbReference type="GO" id="GO:0009254">
    <property type="term" value="P:peptidoglycan turnover"/>
    <property type="evidence" value="ECO:0007669"/>
    <property type="project" value="UniProtKB-UniRule"/>
</dbReference>
<dbReference type="CDD" id="cd24050">
    <property type="entry name" value="ASKHA_NBD_ANMK"/>
    <property type="match status" value="1"/>
</dbReference>
<dbReference type="Gene3D" id="3.30.420.40">
    <property type="match status" value="2"/>
</dbReference>
<dbReference type="HAMAP" id="MF_01270">
    <property type="entry name" value="AnhMurNAc_kinase"/>
    <property type="match status" value="1"/>
</dbReference>
<dbReference type="InterPro" id="IPR005338">
    <property type="entry name" value="Anhydro_N_Ac-Mur_kinase"/>
</dbReference>
<dbReference type="InterPro" id="IPR043129">
    <property type="entry name" value="ATPase_NBD"/>
</dbReference>
<dbReference type="NCBIfam" id="NF007139">
    <property type="entry name" value="PRK09585.1-3"/>
    <property type="match status" value="1"/>
</dbReference>
<dbReference type="PANTHER" id="PTHR30605">
    <property type="entry name" value="ANHYDRO-N-ACETYLMURAMIC ACID KINASE"/>
    <property type="match status" value="1"/>
</dbReference>
<dbReference type="PANTHER" id="PTHR30605:SF0">
    <property type="entry name" value="ANHYDRO-N-ACETYLMURAMIC ACID KINASE"/>
    <property type="match status" value="1"/>
</dbReference>
<dbReference type="Pfam" id="PF03702">
    <property type="entry name" value="AnmK"/>
    <property type="match status" value="1"/>
</dbReference>
<dbReference type="SUPFAM" id="SSF53067">
    <property type="entry name" value="Actin-like ATPase domain"/>
    <property type="match status" value="1"/>
</dbReference>
<protein>
    <recommendedName>
        <fullName evidence="1">Anhydro-N-acetylmuramic acid kinase</fullName>
        <ecNumber evidence="1">2.7.1.170</ecNumber>
    </recommendedName>
    <alternativeName>
        <fullName evidence="1">AnhMurNAc kinase</fullName>
    </alternativeName>
</protein>
<gene>
    <name evidence="1" type="primary">anmK</name>
    <name type="ordered locus">Tcr_0351</name>
</gene>
<name>ANMK_HYDCU</name>
<keyword id="KW-0067">ATP-binding</keyword>
<keyword id="KW-0119">Carbohydrate metabolism</keyword>
<keyword id="KW-0418">Kinase</keyword>
<keyword id="KW-0547">Nucleotide-binding</keyword>
<keyword id="KW-0808">Transferase</keyword>
<proteinExistence type="inferred from homology"/>
<reference key="1">
    <citation type="journal article" date="2006" name="PLoS Biol.">
        <title>The genome of deep-sea vent chemolithoautotroph Thiomicrospira crunogena XCL-2.</title>
        <authorList>
            <person name="Scott K.M."/>
            <person name="Sievert S.M."/>
            <person name="Abril F.N."/>
            <person name="Ball L.A."/>
            <person name="Barrett C.J."/>
            <person name="Blake R.A."/>
            <person name="Boller A.J."/>
            <person name="Chain P.S.G."/>
            <person name="Clark J.A."/>
            <person name="Davis C.R."/>
            <person name="Detter C."/>
            <person name="Do K.F."/>
            <person name="Dobrinski K.P."/>
            <person name="Faza B.I."/>
            <person name="Fitzpatrick K.A."/>
            <person name="Freyermuth S.K."/>
            <person name="Harmer T.L."/>
            <person name="Hauser L.J."/>
            <person name="Huegler M."/>
            <person name="Kerfeld C.A."/>
            <person name="Klotz M.G."/>
            <person name="Kong W.W."/>
            <person name="Land M."/>
            <person name="Lapidus A."/>
            <person name="Larimer F.W."/>
            <person name="Longo D.L."/>
            <person name="Lucas S."/>
            <person name="Malfatti S.A."/>
            <person name="Massey S.E."/>
            <person name="Martin D.D."/>
            <person name="McCuddin Z."/>
            <person name="Meyer F."/>
            <person name="Moore J.L."/>
            <person name="Ocampo L.H. Jr."/>
            <person name="Paul J.H."/>
            <person name="Paulsen I.T."/>
            <person name="Reep D.K."/>
            <person name="Ren Q."/>
            <person name="Ross R.L."/>
            <person name="Sato P.Y."/>
            <person name="Thomas P."/>
            <person name="Tinkham L.E."/>
            <person name="Zeruth G.T."/>
        </authorList>
    </citation>
    <scope>NUCLEOTIDE SEQUENCE [LARGE SCALE GENOMIC DNA]</scope>
    <source>
        <strain>DSM 25203 / XCL-2</strain>
    </source>
</reference>